<sequence length="235" mass="26019">MSVHIGAKQGEIADKILLPGDPLRAKYIAETFLEEPKLYNEVRGMYGYTGTYKGERVSVQGTGMGVPSISIYVNELIQSYDVKKLIRVGTCGAIQKDVNVRDVILAQGATTDSQMNRLIFNGIDYAPIADFELLKNAYDAGVDKGLHLRVGNVFTSDTFYRDNAQQVNELLAKYQVLAIEMESTALYTLAAKYGRQALSVLTVSDHIITGEETTAEERQTTFNDMMEIALDTIIK</sequence>
<feature type="chain" id="PRO_0000063149" description="Purine nucleoside phosphorylase DeoD-type">
    <location>
        <begin position="1"/>
        <end position="235"/>
    </location>
</feature>
<feature type="active site" description="Proton donor" evidence="2">
    <location>
        <position position="205"/>
    </location>
</feature>
<feature type="binding site" evidence="1">
    <location>
        <position position="4"/>
    </location>
    <ligand>
        <name>a purine D-ribonucleoside</name>
        <dbReference type="ChEBI" id="CHEBI:142355"/>
        <note>ligand shared between dimeric partners</note>
    </ligand>
</feature>
<feature type="binding site" description="in other chain" evidence="1">
    <location>
        <position position="20"/>
    </location>
    <ligand>
        <name>phosphate</name>
        <dbReference type="ChEBI" id="CHEBI:43474"/>
        <note>ligand shared between dimeric partners</note>
    </ligand>
</feature>
<feature type="binding site" description="in other chain" evidence="1">
    <location>
        <position position="24"/>
    </location>
    <ligand>
        <name>phosphate</name>
        <dbReference type="ChEBI" id="CHEBI:43474"/>
        <note>ligand shared between dimeric partners</note>
    </ligand>
</feature>
<feature type="binding site" evidence="1">
    <location>
        <position position="43"/>
    </location>
    <ligand>
        <name>phosphate</name>
        <dbReference type="ChEBI" id="CHEBI:43474"/>
        <note>ligand shared between dimeric partners</note>
    </ligand>
</feature>
<feature type="binding site" description="in other chain" evidence="1">
    <location>
        <begin position="87"/>
        <end position="90"/>
    </location>
    <ligand>
        <name>phosphate</name>
        <dbReference type="ChEBI" id="CHEBI:43474"/>
        <note>ligand shared between dimeric partners</note>
    </ligand>
</feature>
<feature type="binding site" description="in other chain" evidence="1">
    <location>
        <begin position="180"/>
        <end position="182"/>
    </location>
    <ligand>
        <name>a purine D-ribonucleoside</name>
        <dbReference type="ChEBI" id="CHEBI:142355"/>
        <note>ligand shared between dimeric partners</note>
    </ligand>
</feature>
<feature type="binding site" description="in other chain" evidence="1">
    <location>
        <begin position="204"/>
        <end position="205"/>
    </location>
    <ligand>
        <name>a purine D-ribonucleoside</name>
        <dbReference type="ChEBI" id="CHEBI:142355"/>
        <note>ligand shared between dimeric partners</note>
    </ligand>
</feature>
<feature type="site" description="Important for catalytic activity" evidence="2">
    <location>
        <position position="218"/>
    </location>
</feature>
<gene>
    <name evidence="2" type="primary">deoD</name>
    <name type="ordered locus">OB2345</name>
</gene>
<keyword id="KW-0328">Glycosyltransferase</keyword>
<keyword id="KW-1185">Reference proteome</keyword>
<keyword id="KW-0808">Transferase</keyword>
<dbReference type="EC" id="2.4.2.1" evidence="2"/>
<dbReference type="EMBL" id="BA000028">
    <property type="protein sequence ID" value="BAC14301.1"/>
    <property type="molecule type" value="Genomic_DNA"/>
</dbReference>
<dbReference type="RefSeq" id="WP_011066737.1">
    <property type="nucleotide sequence ID" value="NC_004193.1"/>
</dbReference>
<dbReference type="SMR" id="Q8ENY0"/>
<dbReference type="STRING" id="221109.gene:10734596"/>
<dbReference type="KEGG" id="oih:OB2345"/>
<dbReference type="eggNOG" id="COG0813">
    <property type="taxonomic scope" value="Bacteria"/>
</dbReference>
<dbReference type="HOGENOM" id="CLU_068457_2_0_9"/>
<dbReference type="OrthoDB" id="9782889at2"/>
<dbReference type="PhylomeDB" id="Q8ENY0"/>
<dbReference type="Proteomes" id="UP000000822">
    <property type="component" value="Chromosome"/>
</dbReference>
<dbReference type="GO" id="GO:0005829">
    <property type="term" value="C:cytosol"/>
    <property type="evidence" value="ECO:0007669"/>
    <property type="project" value="TreeGrafter"/>
</dbReference>
<dbReference type="GO" id="GO:0004731">
    <property type="term" value="F:purine-nucleoside phosphorylase activity"/>
    <property type="evidence" value="ECO:0007669"/>
    <property type="project" value="UniProtKB-UniRule"/>
</dbReference>
<dbReference type="GO" id="GO:0006152">
    <property type="term" value="P:purine nucleoside catabolic process"/>
    <property type="evidence" value="ECO:0007669"/>
    <property type="project" value="TreeGrafter"/>
</dbReference>
<dbReference type="CDD" id="cd09006">
    <property type="entry name" value="PNP_EcPNPI-like"/>
    <property type="match status" value="1"/>
</dbReference>
<dbReference type="Gene3D" id="3.40.50.1580">
    <property type="entry name" value="Nucleoside phosphorylase domain"/>
    <property type="match status" value="1"/>
</dbReference>
<dbReference type="HAMAP" id="MF_01627">
    <property type="entry name" value="Pur_nucleosid_phosp"/>
    <property type="match status" value="1"/>
</dbReference>
<dbReference type="InterPro" id="IPR004402">
    <property type="entry name" value="DeoD-type"/>
</dbReference>
<dbReference type="InterPro" id="IPR018016">
    <property type="entry name" value="Nucleoside_phosphorylase_CS"/>
</dbReference>
<dbReference type="InterPro" id="IPR000845">
    <property type="entry name" value="Nucleoside_phosphorylase_d"/>
</dbReference>
<dbReference type="InterPro" id="IPR035994">
    <property type="entry name" value="Nucleoside_phosphorylase_sf"/>
</dbReference>
<dbReference type="NCBIfam" id="TIGR00107">
    <property type="entry name" value="deoD"/>
    <property type="match status" value="1"/>
</dbReference>
<dbReference type="NCBIfam" id="NF004489">
    <property type="entry name" value="PRK05819.1"/>
    <property type="match status" value="1"/>
</dbReference>
<dbReference type="PANTHER" id="PTHR43691:SF11">
    <property type="entry name" value="FI09636P-RELATED"/>
    <property type="match status" value="1"/>
</dbReference>
<dbReference type="PANTHER" id="PTHR43691">
    <property type="entry name" value="URIDINE PHOSPHORYLASE"/>
    <property type="match status" value="1"/>
</dbReference>
<dbReference type="Pfam" id="PF01048">
    <property type="entry name" value="PNP_UDP_1"/>
    <property type="match status" value="1"/>
</dbReference>
<dbReference type="SUPFAM" id="SSF53167">
    <property type="entry name" value="Purine and uridine phosphorylases"/>
    <property type="match status" value="1"/>
</dbReference>
<dbReference type="PROSITE" id="PS01232">
    <property type="entry name" value="PNP_UDP_1"/>
    <property type="match status" value="1"/>
</dbReference>
<organism>
    <name type="scientific">Oceanobacillus iheyensis (strain DSM 14371 / CIP 107618 / JCM 11309 / KCTC 3954 / HTE831)</name>
    <dbReference type="NCBI Taxonomy" id="221109"/>
    <lineage>
        <taxon>Bacteria</taxon>
        <taxon>Bacillati</taxon>
        <taxon>Bacillota</taxon>
        <taxon>Bacilli</taxon>
        <taxon>Bacillales</taxon>
        <taxon>Bacillaceae</taxon>
        <taxon>Oceanobacillus</taxon>
    </lineage>
</organism>
<comment type="function">
    <text evidence="2">Catalyzes the reversible phosphorolytic breakdown of the N-glycosidic bond in the beta-(deoxy)ribonucleoside molecules, with the formation of the corresponding free purine bases and pentose-1-phosphate.</text>
</comment>
<comment type="catalytic activity">
    <reaction evidence="2">
        <text>a purine D-ribonucleoside + phosphate = a purine nucleobase + alpha-D-ribose 1-phosphate</text>
        <dbReference type="Rhea" id="RHEA:19805"/>
        <dbReference type="ChEBI" id="CHEBI:26386"/>
        <dbReference type="ChEBI" id="CHEBI:43474"/>
        <dbReference type="ChEBI" id="CHEBI:57720"/>
        <dbReference type="ChEBI" id="CHEBI:142355"/>
        <dbReference type="EC" id="2.4.2.1"/>
    </reaction>
</comment>
<comment type="catalytic activity">
    <reaction evidence="2">
        <text>a purine 2'-deoxy-D-ribonucleoside + phosphate = a purine nucleobase + 2-deoxy-alpha-D-ribose 1-phosphate</text>
        <dbReference type="Rhea" id="RHEA:36431"/>
        <dbReference type="ChEBI" id="CHEBI:26386"/>
        <dbReference type="ChEBI" id="CHEBI:43474"/>
        <dbReference type="ChEBI" id="CHEBI:57259"/>
        <dbReference type="ChEBI" id="CHEBI:142361"/>
        <dbReference type="EC" id="2.4.2.1"/>
    </reaction>
</comment>
<comment type="subunit">
    <text evidence="2">Homohexamer; trimer of homodimers.</text>
</comment>
<comment type="similarity">
    <text evidence="2">Belongs to the PNP/UDP phosphorylase family.</text>
</comment>
<name>DEOD_OCEIH</name>
<proteinExistence type="inferred from homology"/>
<accession>Q8ENY0</accession>
<evidence type="ECO:0000250" key="1">
    <source>
        <dbReference type="UniProtKB" id="P50389"/>
    </source>
</evidence>
<evidence type="ECO:0000255" key="2">
    <source>
        <dbReference type="HAMAP-Rule" id="MF_01627"/>
    </source>
</evidence>
<protein>
    <recommendedName>
        <fullName evidence="2">Purine nucleoside phosphorylase DeoD-type</fullName>
        <shortName evidence="2">PNP</shortName>
        <ecNumber evidence="2">2.4.2.1</ecNumber>
    </recommendedName>
</protein>
<reference key="1">
    <citation type="journal article" date="2002" name="Nucleic Acids Res.">
        <title>Genome sequence of Oceanobacillus iheyensis isolated from the Iheya Ridge and its unexpected adaptive capabilities to extreme environments.</title>
        <authorList>
            <person name="Takami H."/>
            <person name="Takaki Y."/>
            <person name="Uchiyama I."/>
        </authorList>
    </citation>
    <scope>NUCLEOTIDE SEQUENCE [LARGE SCALE GENOMIC DNA]</scope>
    <source>
        <strain>DSM 14371 / CIP 107618 / JCM 11309 / KCTC 3954 / HTE831</strain>
    </source>
</reference>